<name>SYS_PHOLL</name>
<reference key="1">
    <citation type="journal article" date="2003" name="Nat. Biotechnol.">
        <title>The genome sequence of the entomopathogenic bacterium Photorhabdus luminescens.</title>
        <authorList>
            <person name="Duchaud E."/>
            <person name="Rusniok C."/>
            <person name="Frangeul L."/>
            <person name="Buchrieser C."/>
            <person name="Givaudan A."/>
            <person name="Taourit S."/>
            <person name="Bocs S."/>
            <person name="Boursaux-Eude C."/>
            <person name="Chandler M."/>
            <person name="Charles J.-F."/>
            <person name="Dassa E."/>
            <person name="Derose R."/>
            <person name="Derzelle S."/>
            <person name="Freyssinet G."/>
            <person name="Gaudriault S."/>
            <person name="Medigue C."/>
            <person name="Lanois A."/>
            <person name="Powell K."/>
            <person name="Siguier P."/>
            <person name="Vincent R."/>
            <person name="Wingate V."/>
            <person name="Zouine M."/>
            <person name="Glaser P."/>
            <person name="Boemare N."/>
            <person name="Danchin A."/>
            <person name="Kunst F."/>
        </authorList>
    </citation>
    <scope>NUCLEOTIDE SEQUENCE [LARGE SCALE GENOMIC DNA]</scope>
    <source>
        <strain>DSM 15139 / CIP 105565 / TT01</strain>
    </source>
</reference>
<organism>
    <name type="scientific">Photorhabdus laumondii subsp. laumondii (strain DSM 15139 / CIP 105565 / TT01)</name>
    <name type="common">Photorhabdus luminescens subsp. laumondii</name>
    <dbReference type="NCBI Taxonomy" id="243265"/>
    <lineage>
        <taxon>Bacteria</taxon>
        <taxon>Pseudomonadati</taxon>
        <taxon>Pseudomonadota</taxon>
        <taxon>Gammaproteobacteria</taxon>
        <taxon>Enterobacterales</taxon>
        <taxon>Morganellaceae</taxon>
        <taxon>Photorhabdus</taxon>
    </lineage>
</organism>
<gene>
    <name evidence="1" type="primary">serS</name>
    <name type="ordered locus">plu1604</name>
</gene>
<comment type="function">
    <text evidence="1">Catalyzes the attachment of serine to tRNA(Ser). Is also able to aminoacylate tRNA(Sec) with serine, to form the misacylated tRNA L-seryl-tRNA(Sec), which will be further converted into selenocysteinyl-tRNA(Sec).</text>
</comment>
<comment type="catalytic activity">
    <reaction evidence="1">
        <text>tRNA(Ser) + L-serine + ATP = L-seryl-tRNA(Ser) + AMP + diphosphate + H(+)</text>
        <dbReference type="Rhea" id="RHEA:12292"/>
        <dbReference type="Rhea" id="RHEA-COMP:9669"/>
        <dbReference type="Rhea" id="RHEA-COMP:9703"/>
        <dbReference type="ChEBI" id="CHEBI:15378"/>
        <dbReference type="ChEBI" id="CHEBI:30616"/>
        <dbReference type="ChEBI" id="CHEBI:33019"/>
        <dbReference type="ChEBI" id="CHEBI:33384"/>
        <dbReference type="ChEBI" id="CHEBI:78442"/>
        <dbReference type="ChEBI" id="CHEBI:78533"/>
        <dbReference type="ChEBI" id="CHEBI:456215"/>
        <dbReference type="EC" id="6.1.1.11"/>
    </reaction>
</comment>
<comment type="catalytic activity">
    <reaction evidence="1">
        <text>tRNA(Sec) + L-serine + ATP = L-seryl-tRNA(Sec) + AMP + diphosphate + H(+)</text>
        <dbReference type="Rhea" id="RHEA:42580"/>
        <dbReference type="Rhea" id="RHEA-COMP:9742"/>
        <dbReference type="Rhea" id="RHEA-COMP:10128"/>
        <dbReference type="ChEBI" id="CHEBI:15378"/>
        <dbReference type="ChEBI" id="CHEBI:30616"/>
        <dbReference type="ChEBI" id="CHEBI:33019"/>
        <dbReference type="ChEBI" id="CHEBI:33384"/>
        <dbReference type="ChEBI" id="CHEBI:78442"/>
        <dbReference type="ChEBI" id="CHEBI:78533"/>
        <dbReference type="ChEBI" id="CHEBI:456215"/>
        <dbReference type="EC" id="6.1.1.11"/>
    </reaction>
</comment>
<comment type="pathway">
    <text evidence="1">Aminoacyl-tRNA biosynthesis; selenocysteinyl-tRNA(Sec) biosynthesis; L-seryl-tRNA(Sec) from L-serine and tRNA(Sec): step 1/1.</text>
</comment>
<comment type="subunit">
    <text evidence="1">Homodimer. The tRNA molecule binds across the dimer.</text>
</comment>
<comment type="subcellular location">
    <subcellularLocation>
        <location evidence="1">Cytoplasm</location>
    </subcellularLocation>
</comment>
<comment type="domain">
    <text evidence="1">Consists of two distinct domains, a catalytic core and a N-terminal extension that is involved in tRNA binding.</text>
</comment>
<comment type="similarity">
    <text evidence="1">Belongs to the class-II aminoacyl-tRNA synthetase family. Type-1 seryl-tRNA synthetase subfamily.</text>
</comment>
<accession>Q7N6E7</accession>
<proteinExistence type="inferred from homology"/>
<evidence type="ECO:0000255" key="1">
    <source>
        <dbReference type="HAMAP-Rule" id="MF_00176"/>
    </source>
</evidence>
<sequence>MLDPNILRNELGAVAEKLARRGYTLDVDTLRKQEERRKVLQVETETLQAERNSRSKAIGAAKARGEDIDPLRQEVNQLGEKLDTAKAELEKLQAEIRDLALSIPNIPDDSVPVGKDENDNLEVSRWGEPGKYDFEIQDHVSLGELTNGLDFAAAVKLTGSRFVVMKGQIARLHRALAQFMLNLHTEQHGYLETYVPYLVNHETLYGTGQLPKFGEDLFHTKPLEEEAESHYALIPTAEVPITNLVRGDILDENELPLKMTAHTPCFRSEAGSYGRDTRGLIRMHQFDKVELVQIVHPDESMDALEALTGHAEKVLQLLNLPYRKVLLCTGDMGFSACKTYDLEVWLPAQNTYREISSCSNMWDFQARRMQARFRGKEDKKTQLLHTLNGSGLAVGRTLVAVMENYQQADGRIEIPEVLRPYMGGLEYIG</sequence>
<keyword id="KW-0030">Aminoacyl-tRNA synthetase</keyword>
<keyword id="KW-0067">ATP-binding</keyword>
<keyword id="KW-0963">Cytoplasm</keyword>
<keyword id="KW-0436">Ligase</keyword>
<keyword id="KW-0547">Nucleotide-binding</keyword>
<keyword id="KW-0648">Protein biosynthesis</keyword>
<keyword id="KW-1185">Reference proteome</keyword>
<dbReference type="EC" id="6.1.1.11" evidence="1"/>
<dbReference type="EMBL" id="BX571864">
    <property type="protein sequence ID" value="CAE13897.1"/>
    <property type="molecule type" value="Genomic_DNA"/>
</dbReference>
<dbReference type="RefSeq" id="WP_011145900.1">
    <property type="nucleotide sequence ID" value="NC_005126.1"/>
</dbReference>
<dbReference type="SMR" id="Q7N6E7"/>
<dbReference type="STRING" id="243265.plu1604"/>
<dbReference type="GeneID" id="48847892"/>
<dbReference type="KEGG" id="plu:plu1604"/>
<dbReference type="eggNOG" id="COG0172">
    <property type="taxonomic scope" value="Bacteria"/>
</dbReference>
<dbReference type="HOGENOM" id="CLU_023797_1_1_6"/>
<dbReference type="OrthoDB" id="9804647at2"/>
<dbReference type="UniPathway" id="UPA00906">
    <property type="reaction ID" value="UER00895"/>
</dbReference>
<dbReference type="Proteomes" id="UP000002514">
    <property type="component" value="Chromosome"/>
</dbReference>
<dbReference type="GO" id="GO:0005737">
    <property type="term" value="C:cytoplasm"/>
    <property type="evidence" value="ECO:0007669"/>
    <property type="project" value="UniProtKB-SubCell"/>
</dbReference>
<dbReference type="GO" id="GO:0005524">
    <property type="term" value="F:ATP binding"/>
    <property type="evidence" value="ECO:0007669"/>
    <property type="project" value="UniProtKB-UniRule"/>
</dbReference>
<dbReference type="GO" id="GO:0004828">
    <property type="term" value="F:serine-tRNA ligase activity"/>
    <property type="evidence" value="ECO:0007669"/>
    <property type="project" value="UniProtKB-UniRule"/>
</dbReference>
<dbReference type="GO" id="GO:0016260">
    <property type="term" value="P:selenocysteine biosynthetic process"/>
    <property type="evidence" value="ECO:0007669"/>
    <property type="project" value="UniProtKB-UniRule"/>
</dbReference>
<dbReference type="GO" id="GO:0006434">
    <property type="term" value="P:seryl-tRNA aminoacylation"/>
    <property type="evidence" value="ECO:0007669"/>
    <property type="project" value="UniProtKB-UniRule"/>
</dbReference>
<dbReference type="CDD" id="cd00770">
    <property type="entry name" value="SerRS_core"/>
    <property type="match status" value="1"/>
</dbReference>
<dbReference type="FunFam" id="1.10.287.40:FF:000001">
    <property type="entry name" value="Serine--tRNA ligase"/>
    <property type="match status" value="1"/>
</dbReference>
<dbReference type="FunFam" id="3.30.930.10:FF:000018">
    <property type="entry name" value="Serine--tRNA ligase"/>
    <property type="match status" value="1"/>
</dbReference>
<dbReference type="Gene3D" id="3.30.930.10">
    <property type="entry name" value="Bira Bifunctional Protein, Domain 2"/>
    <property type="match status" value="1"/>
</dbReference>
<dbReference type="Gene3D" id="1.10.287.40">
    <property type="entry name" value="Serine-tRNA synthetase, tRNA binding domain"/>
    <property type="match status" value="1"/>
</dbReference>
<dbReference type="HAMAP" id="MF_00176">
    <property type="entry name" value="Ser_tRNA_synth_type1"/>
    <property type="match status" value="1"/>
</dbReference>
<dbReference type="InterPro" id="IPR002314">
    <property type="entry name" value="aa-tRNA-synt_IIb"/>
</dbReference>
<dbReference type="InterPro" id="IPR006195">
    <property type="entry name" value="aa-tRNA-synth_II"/>
</dbReference>
<dbReference type="InterPro" id="IPR045864">
    <property type="entry name" value="aa-tRNA-synth_II/BPL/LPL"/>
</dbReference>
<dbReference type="InterPro" id="IPR002317">
    <property type="entry name" value="Ser-tRNA-ligase_type_1"/>
</dbReference>
<dbReference type="InterPro" id="IPR015866">
    <property type="entry name" value="Ser-tRNA-synth_1_N"/>
</dbReference>
<dbReference type="InterPro" id="IPR042103">
    <property type="entry name" value="SerRS_1_N_sf"/>
</dbReference>
<dbReference type="InterPro" id="IPR033729">
    <property type="entry name" value="SerRS_core"/>
</dbReference>
<dbReference type="InterPro" id="IPR010978">
    <property type="entry name" value="tRNA-bd_arm"/>
</dbReference>
<dbReference type="NCBIfam" id="TIGR00414">
    <property type="entry name" value="serS"/>
    <property type="match status" value="1"/>
</dbReference>
<dbReference type="PANTHER" id="PTHR43697:SF1">
    <property type="entry name" value="SERINE--TRNA LIGASE"/>
    <property type="match status" value="1"/>
</dbReference>
<dbReference type="PANTHER" id="PTHR43697">
    <property type="entry name" value="SERYL-TRNA SYNTHETASE"/>
    <property type="match status" value="1"/>
</dbReference>
<dbReference type="Pfam" id="PF02403">
    <property type="entry name" value="Seryl_tRNA_N"/>
    <property type="match status" value="1"/>
</dbReference>
<dbReference type="Pfam" id="PF00587">
    <property type="entry name" value="tRNA-synt_2b"/>
    <property type="match status" value="1"/>
</dbReference>
<dbReference type="PIRSF" id="PIRSF001529">
    <property type="entry name" value="Ser-tRNA-synth_IIa"/>
    <property type="match status" value="1"/>
</dbReference>
<dbReference type="PRINTS" id="PR00981">
    <property type="entry name" value="TRNASYNTHSER"/>
</dbReference>
<dbReference type="SUPFAM" id="SSF55681">
    <property type="entry name" value="Class II aaRS and biotin synthetases"/>
    <property type="match status" value="1"/>
</dbReference>
<dbReference type="SUPFAM" id="SSF46589">
    <property type="entry name" value="tRNA-binding arm"/>
    <property type="match status" value="1"/>
</dbReference>
<dbReference type="PROSITE" id="PS50862">
    <property type="entry name" value="AA_TRNA_LIGASE_II"/>
    <property type="match status" value="1"/>
</dbReference>
<feature type="chain" id="PRO_0000122096" description="Serine--tRNA ligase">
    <location>
        <begin position="1"/>
        <end position="429"/>
    </location>
</feature>
<feature type="binding site" evidence="1">
    <location>
        <begin position="236"/>
        <end position="238"/>
    </location>
    <ligand>
        <name>L-serine</name>
        <dbReference type="ChEBI" id="CHEBI:33384"/>
    </ligand>
</feature>
<feature type="binding site" evidence="1">
    <location>
        <begin position="267"/>
        <end position="269"/>
    </location>
    <ligand>
        <name>ATP</name>
        <dbReference type="ChEBI" id="CHEBI:30616"/>
    </ligand>
</feature>
<feature type="binding site" evidence="1">
    <location>
        <position position="290"/>
    </location>
    <ligand>
        <name>L-serine</name>
        <dbReference type="ChEBI" id="CHEBI:33384"/>
    </ligand>
</feature>
<feature type="binding site" evidence="1">
    <location>
        <begin position="354"/>
        <end position="357"/>
    </location>
    <ligand>
        <name>ATP</name>
        <dbReference type="ChEBI" id="CHEBI:30616"/>
    </ligand>
</feature>
<feature type="binding site" evidence="1">
    <location>
        <position position="390"/>
    </location>
    <ligand>
        <name>L-serine</name>
        <dbReference type="ChEBI" id="CHEBI:33384"/>
    </ligand>
</feature>
<protein>
    <recommendedName>
        <fullName evidence="1">Serine--tRNA ligase</fullName>
        <ecNumber evidence="1">6.1.1.11</ecNumber>
    </recommendedName>
    <alternativeName>
        <fullName evidence="1">Seryl-tRNA synthetase</fullName>
        <shortName evidence="1">SerRS</shortName>
    </alternativeName>
    <alternativeName>
        <fullName evidence="1">Seryl-tRNA(Ser/Sec) synthetase</fullName>
    </alternativeName>
</protein>